<organism>
    <name type="scientific">Burkholderia cenocepacia (strain ATCC BAA-245 / DSM 16553 / LMG 16656 / NCTC 13227 / J2315 / CF5610)</name>
    <name type="common">Burkholderia cepacia (strain J2315)</name>
    <dbReference type="NCBI Taxonomy" id="216591"/>
    <lineage>
        <taxon>Bacteria</taxon>
        <taxon>Pseudomonadati</taxon>
        <taxon>Pseudomonadota</taxon>
        <taxon>Betaproteobacteria</taxon>
        <taxon>Burkholderiales</taxon>
        <taxon>Burkholderiaceae</taxon>
        <taxon>Burkholderia</taxon>
        <taxon>Burkholderia cepacia complex</taxon>
    </lineage>
</organism>
<feature type="chain" id="PRO_0000445023" description="HTH-type transcriptional regulator SsuR">
    <location>
        <begin position="1"/>
        <end position="308"/>
    </location>
</feature>
<feature type="domain" description="HTH lysR-type" evidence="1">
    <location>
        <begin position="1"/>
        <end position="59"/>
    </location>
</feature>
<feature type="DNA-binding region" description="H-T-H motif" evidence="1">
    <location>
        <begin position="19"/>
        <end position="38"/>
    </location>
</feature>
<protein>
    <recommendedName>
        <fullName evidence="5">HTH-type transcriptional regulator SsuR</fullName>
    </recommendedName>
</protein>
<gene>
    <name evidence="4" type="primary">ssuR</name>
    <name evidence="5" type="ordered locus">BceJ2315_16200</name>
    <name evidence="6" type="ORF">BCAL1656</name>
</gene>
<proteinExistence type="evidence at protein level"/>
<dbReference type="EMBL" id="AM747720">
    <property type="protein sequence ID" value="CAR51955.1"/>
    <property type="molecule type" value="Genomic_DNA"/>
</dbReference>
<dbReference type="RefSeq" id="WP_006484201.1">
    <property type="nucleotide sequence ID" value="NC_011000.1"/>
</dbReference>
<dbReference type="SMR" id="B4E8S9"/>
<dbReference type="KEGG" id="bcj:BCAL1656"/>
<dbReference type="eggNOG" id="COG0583">
    <property type="taxonomic scope" value="Bacteria"/>
</dbReference>
<dbReference type="HOGENOM" id="CLU_039613_6_2_4"/>
<dbReference type="BioCyc" id="BCEN216591:G1G1V-1836-MONOMER"/>
<dbReference type="Proteomes" id="UP000001035">
    <property type="component" value="Chromosome 1"/>
</dbReference>
<dbReference type="GO" id="GO:0003700">
    <property type="term" value="F:DNA-binding transcription factor activity"/>
    <property type="evidence" value="ECO:0007669"/>
    <property type="project" value="InterPro"/>
</dbReference>
<dbReference type="GO" id="GO:0000976">
    <property type="term" value="F:transcription cis-regulatory region binding"/>
    <property type="evidence" value="ECO:0007669"/>
    <property type="project" value="TreeGrafter"/>
</dbReference>
<dbReference type="GO" id="GO:0019344">
    <property type="term" value="P:cysteine biosynthetic process"/>
    <property type="evidence" value="ECO:0007669"/>
    <property type="project" value="TreeGrafter"/>
</dbReference>
<dbReference type="CDD" id="cd08413">
    <property type="entry name" value="PBP2_CysB_like"/>
    <property type="match status" value="1"/>
</dbReference>
<dbReference type="Gene3D" id="3.40.190.10">
    <property type="entry name" value="Periplasmic binding protein-like II"/>
    <property type="match status" value="2"/>
</dbReference>
<dbReference type="Gene3D" id="1.10.10.10">
    <property type="entry name" value="Winged helix-like DNA-binding domain superfamily/Winged helix DNA-binding domain"/>
    <property type="match status" value="1"/>
</dbReference>
<dbReference type="InterPro" id="IPR037423">
    <property type="entry name" value="CysB_PBP2"/>
</dbReference>
<dbReference type="InterPro" id="IPR005119">
    <property type="entry name" value="LysR_subst-bd"/>
</dbReference>
<dbReference type="InterPro" id="IPR000847">
    <property type="entry name" value="Tscrpt_reg_HTH_LysR"/>
</dbReference>
<dbReference type="InterPro" id="IPR036388">
    <property type="entry name" value="WH-like_DNA-bd_sf"/>
</dbReference>
<dbReference type="InterPro" id="IPR036390">
    <property type="entry name" value="WH_DNA-bd_sf"/>
</dbReference>
<dbReference type="NCBIfam" id="NF009327">
    <property type="entry name" value="PRK12684.1"/>
    <property type="match status" value="1"/>
</dbReference>
<dbReference type="PANTHER" id="PTHR30126">
    <property type="entry name" value="HTH-TYPE TRANSCRIPTIONAL REGULATOR"/>
    <property type="match status" value="1"/>
</dbReference>
<dbReference type="PANTHER" id="PTHR30126:SF6">
    <property type="entry name" value="HTH-TYPE TRANSCRIPTIONAL REGULATOR CYSB-RELATED"/>
    <property type="match status" value="1"/>
</dbReference>
<dbReference type="Pfam" id="PF00126">
    <property type="entry name" value="HTH_1"/>
    <property type="match status" value="1"/>
</dbReference>
<dbReference type="Pfam" id="PF03466">
    <property type="entry name" value="LysR_substrate"/>
    <property type="match status" value="1"/>
</dbReference>
<dbReference type="PRINTS" id="PR00039">
    <property type="entry name" value="HTHLYSR"/>
</dbReference>
<dbReference type="SUPFAM" id="SSF53850">
    <property type="entry name" value="Periplasmic binding protein-like II"/>
    <property type="match status" value="1"/>
</dbReference>
<dbReference type="SUPFAM" id="SSF46785">
    <property type="entry name" value="Winged helix' DNA-binding domain"/>
    <property type="match status" value="1"/>
</dbReference>
<dbReference type="PROSITE" id="PS50931">
    <property type="entry name" value="HTH_LYSR"/>
    <property type="match status" value="1"/>
</dbReference>
<reference key="1">
    <citation type="journal article" date="2009" name="J. Bacteriol.">
        <title>The genome of Burkholderia cenocepacia J2315, an epidemic pathogen of cystic fibrosis patients.</title>
        <authorList>
            <person name="Holden M.T."/>
            <person name="Seth-Smith H.M."/>
            <person name="Crossman L.C."/>
            <person name="Sebaihia M."/>
            <person name="Bentley S.D."/>
            <person name="Cerdeno-Tarraga A.M."/>
            <person name="Thomson N.R."/>
            <person name="Bason N."/>
            <person name="Quail M.A."/>
            <person name="Sharp S."/>
            <person name="Cherevach I."/>
            <person name="Churcher C."/>
            <person name="Goodhead I."/>
            <person name="Hauser H."/>
            <person name="Holroyd N."/>
            <person name="Mungall K."/>
            <person name="Scott P."/>
            <person name="Walker D."/>
            <person name="White B."/>
            <person name="Rose H."/>
            <person name="Iversen P."/>
            <person name="Mil-Homens D."/>
            <person name="Rocha E.P."/>
            <person name="Fialho A.M."/>
            <person name="Baldwin A."/>
            <person name="Dowson C."/>
            <person name="Barrell B.G."/>
            <person name="Govan J.R."/>
            <person name="Vandamme P."/>
            <person name="Hart C.A."/>
            <person name="Mahenthiralingam E."/>
            <person name="Parkhill J."/>
        </authorList>
    </citation>
    <scope>NUCLEOTIDE SEQUENCE [LARGE SCALE GENOMIC DNA]</scope>
    <source>
        <strain>ATCC BAA-245 / DSM 16553 / LMG 16656 / NCTC 13227 / J2315 / CF5610</strain>
    </source>
</reference>
<reference key="2">
    <citation type="journal article" date="2007" name="J. Bacteriol.">
        <title>Regulation of sulfur assimilation pathways in Burkholderia cenocepacia: identification of transcription factors CysB and SsuR and their role in control of target genes.</title>
        <authorList>
            <person name="Iwanicka-Nowicka R."/>
            <person name="Zielak A."/>
            <person name="Cook A.M."/>
            <person name="Thomas M.S."/>
            <person name="Hryniewicz M.M."/>
        </authorList>
    </citation>
    <scope>FUNCTION</scope>
    <scope>DNA-BINDING</scope>
    <scope>DISRUPTION PHENOTYPE</scope>
    <source>
        <strain>715j</strain>
    </source>
</reference>
<reference key="3">
    <citation type="journal article" date="2011" name="J. Bacteriol.">
        <title>Regulation of sulfur assimilation pathways in Burkholderia cenocepacia through control of genes by the SsuR transcription factor.</title>
        <authorList>
            <person name="Lochowska A."/>
            <person name="Iwanicka-Nowicka R."/>
            <person name="Zielak A."/>
            <person name="Modelewska A."/>
            <person name="Thomas M.S."/>
            <person name="Hryniewicz M.M."/>
        </authorList>
    </citation>
    <scope>FUNCTION</scope>
    <scope>DNA-BINDING</scope>
    <source>
        <strain>715j</strain>
    </source>
</reference>
<keyword id="KW-0238">DNA-binding</keyword>
<keyword id="KW-0804">Transcription</keyword>
<keyword id="KW-0805">Transcription regulation</keyword>
<name>SSUR_BURCJ</name>
<evidence type="ECO:0000255" key="1">
    <source>
        <dbReference type="PROSITE-ProRule" id="PRU00253"/>
    </source>
</evidence>
<evidence type="ECO:0000269" key="2">
    <source>
    </source>
</evidence>
<evidence type="ECO:0000269" key="3">
    <source>
    </source>
</evidence>
<evidence type="ECO:0000303" key="4">
    <source>
    </source>
</evidence>
<evidence type="ECO:0000305" key="5"/>
<evidence type="ECO:0000312" key="6">
    <source>
        <dbReference type="EMBL" id="CAR51955.1"/>
    </source>
</evidence>
<sequence length="308" mass="34422">MNFQQLRFVREAVRQNMNLTEVANVLYTSQSGVSKQIKDLEDELGVDIFIRRGKRLTGLTEPGKAVHQLIERMLLDAENLRRVARQFADQDSGHLVVATTHTQARYALPKVIRQFTDVFPKVHLALRQGSPQQIAQMILNGEADLGISTEALDRYPDIVTFPCYSWHHTVVVPKGHPLVGRENLTLEEIAEYPIITYDQDFTGRSHIDQAFTQAGAVPDVVLTAIDADVIKTYVELGMGIGVVAAMAYDPQRDTGLVALDTQHLFEASTTRVGLRKGAFLRAYAYRLIEMFAPHLNEAEIAGLLREAV</sequence>
<accession>B4E8S9</accession>
<comment type="function">
    <text evidence="2 3">Transcriptional regulator that is essential for the utilization of a number of organic sulfur sources of either environmental or human origin (PubMed:21317335). Required for aliphatic sulfonate utilization (PubMed:16997956). Binds to DNA at target promoter regions (PubMed:16997956, PubMed:21317335). Targets include the ssuDBC operon, the tauABC operon, three tauD-type genes and atsA (PubMed:16997956, PubMed:21317335).</text>
</comment>
<comment type="disruption phenotype">
    <text evidence="2">Mutant grows well with sulfate, but is unable to utilize ethanesulfonate as a sulfur source.</text>
</comment>
<comment type="similarity">
    <text evidence="5">Belongs to the LysR transcriptional regulatory family.</text>
</comment>